<organismHost>
    <name type="scientific">Acanthamoeba polyphaga</name>
    <name type="common">Amoeba</name>
    <dbReference type="NCBI Taxonomy" id="5757"/>
</organismHost>
<comment type="function">
    <text evidence="3">May participate in the formation of a layer of cross-linked glycosylated fibrils at the viral surface thus giving it a hairy-like appearance.</text>
</comment>
<comment type="subcellular location">
    <subcellularLocation>
        <location>Virion</location>
    </subcellularLocation>
</comment>
<comment type="PTM">
    <text evidence="3">May be hydroxylated on lysine by the viral-encoded procollagen-lysine,2-oxoglutarate 5-dioxygenase.</text>
</comment>
<protein>
    <recommendedName>
        <fullName>Collagen-like protein 2</fullName>
    </recommendedName>
</protein>
<evidence type="ECO:0000255" key="1"/>
<evidence type="ECO:0000256" key="2">
    <source>
        <dbReference type="SAM" id="MobiDB-lite"/>
    </source>
</evidence>
<evidence type="ECO:0000305" key="3"/>
<dbReference type="EMBL" id="AY653733">
    <property type="protein sequence ID" value="AAV50469.1"/>
    <property type="molecule type" value="Genomic_DNA"/>
</dbReference>
<dbReference type="KEGG" id="vg:9924803"/>
<dbReference type="Proteomes" id="UP000001134">
    <property type="component" value="Genome"/>
</dbReference>
<dbReference type="GO" id="GO:0044423">
    <property type="term" value="C:virion component"/>
    <property type="evidence" value="ECO:0007669"/>
    <property type="project" value="UniProtKB-KW"/>
</dbReference>
<dbReference type="InterPro" id="IPR008160">
    <property type="entry name" value="Collagen"/>
</dbReference>
<dbReference type="InterPro" id="IPR050938">
    <property type="entry name" value="Collagen_Structural_Proteins"/>
</dbReference>
<dbReference type="PANTHER" id="PTHR37456:SF6">
    <property type="entry name" value="COLLAGEN ALPHA-1(XXIII) CHAIN-LIKE ISOFORM X2"/>
    <property type="match status" value="1"/>
</dbReference>
<dbReference type="PANTHER" id="PTHR37456">
    <property type="entry name" value="SI:CH211-266K2.1"/>
    <property type="match status" value="1"/>
</dbReference>
<dbReference type="Pfam" id="PF01391">
    <property type="entry name" value="Collagen"/>
    <property type="match status" value="7"/>
</dbReference>
<proteinExistence type="predicted"/>
<reference key="1">
    <citation type="journal article" date="2004" name="Science">
        <title>The 1.2-megabase genome sequence of Mimivirus.</title>
        <authorList>
            <person name="Raoult D."/>
            <person name="Audic S."/>
            <person name="Robert C."/>
            <person name="Abergel C."/>
            <person name="Renesto P."/>
            <person name="Ogata H."/>
            <person name="La Scola B."/>
            <person name="Susan M."/>
            <person name="Claverie J.-M."/>
        </authorList>
    </citation>
    <scope>NUCLEOTIDE SEQUENCE [LARGE SCALE GENOMIC DNA]</scope>
    <source>
        <strain>Rowbotham-Bradford</strain>
    </source>
</reference>
<keyword id="KW-0176">Collagen</keyword>
<keyword id="KW-0325">Glycoprotein</keyword>
<keyword id="KW-0379">Hydroxylation</keyword>
<keyword id="KW-1185">Reference proteome</keyword>
<keyword id="KW-0677">Repeat</keyword>
<keyword id="KW-0946">Virion</keyword>
<gene>
    <name type="ordered locus">MIMI_R196</name>
</gene>
<sequence length="1595" mass="158703">MTYIYNIYMSYSRGNLDRYIDQRLNRFYDQLISQRYAYSIPGIPGIKGDKGLTGSRIFLRNGIPQNELGTNGDLYINLLTDDLYFKNDSFWSLVGNLRGEKGEKGQLGIMGYKGEKGEIGSQGIKGMKGSDGLNGSTILFGQGLPRPYEGENGDVYIDKNTGIMYKKINGIWIPQVGLKGSQGDQGYKGDQGSKGDKGQKGEFGSAGFKGDKGDMGQKGETGAKGDKGDKGEGSKGSKGDVGNKGDKGNKGDKGIKGDKGSEGIKGDNGIKGDNGTKGDNGTKGDNGTKGDKGDIGDNGIKGDKGDIGDNGIKGDKGNKGDNGDKGNKGDKGDIGDKGMKGDKGDIGDKGDIGDKGMKGDKGDIGDKGMKGDNSTKGDKGDNGTKGDKGDNGIKGDKGDNGTKGDNGDNGTKGDKGDNGIKGDKGDKGTKGDKGDKGTKGDNGDKGTKGDNGIKGYKGDIGDKGIKGESGANADKGDKGIKGDKGDKGIKGDDGSKGDKGYNGEIGQKGDNGEKGDNGEKGDNGEKGDKGEKGDIGEKGDNGEKGDIGEKGNKGSKGDKGEIGSSILFGQGIPSPDLGNDGDIYIDDNTGILYKKLNGIWVPQTDIKGEKGDKGESGQSANKGDKGDKGNGGEIGNKGDKGSKGDIGDKGNKGDKGDGGIKGNKGDKGSKGDKGSKGDKGDKGDEGIKGDKGNKGDKGDKGDIGSQGIKGESGSAVFKGDKGTKGDKGNKGDKGNKGDKGTNGDKGNKGDKGSKGDKGTKGDKGIKGDKGDKGSKGNKGSKGDKGDKGDSGDKGDKGDKGSKGYKGDKGDKGSKGYKGDKGDKGIKGNTGSKGDKGSKGDKGEKGSKGNKGEKGEKGFKGEKGSKGEKGSKGNKGDKGDKGFKGDNGIKGNIGVKGDKGDSGIKGENGLKGDVGDKGIKGDKGNEGDKGDKGNKGEKGNRGDEGDKGIKGNKGDKGIKGSEGDKGIKGESGSKGDKGEKGNKGYKGDKGDKGNLGIKGDKGDKGIKGVKGTKGDKGTKGVKGTKGDKGDKGTNGDKGDKGIKGTNGDKGNKGLEGDKGNIGGKGDKGDKGDKGDKGDKGDKGVNGDKGSKGDKGDQGTKGETGLSIKGDKGDKGEFGLSIKGDKGVKGDQGYKGDKGDKGIKGDKGDKGIKGDQGIKGNKGDKGDKGNLGDKGDKGIKGDKGIKGDKGIKGDKGIKGDKGIKGDKGDKGIKGDKGDKGDKDDKGNKGDKGDKGDKGIKGDKGDKGDKGDQGDQGIKGESGASVFKGDKGDKGDKGDKGDKGDKGAKGDKGDKGDKGDQGIKGESGASVFKGDKGDTGSQGDKGIKGESGVSLNYVMSYYNATPGNFSSPVPVGASIAYVSTVGGGGGGSYFRRLNVGIVGGGGGGGGGALFRLPLSVMPGQSLSGVIGGPGLGAADSTTNATKGGDTIIYYGQYTFIAGGGNPGINSAADTASFIKGGDGGTVTNPLLTTQPTPGTGSTSTGSAGGNGQMSFYCFSGAGGGAGTSFTSSSGGNVGMFPGGNGVTTTYNNAGSGGGGASAFDKGGNGSIRFNPPSSGTKGSGGGGSVQGGGGTIPNDGYPGGNGGPGFVSIDYYSS</sequence>
<feature type="chain" id="PRO_0000059417" description="Collagen-like protein 2">
    <location>
        <begin position="1"/>
        <end position="1595"/>
    </location>
</feature>
<feature type="domain" description="Collagen-like 1">
    <location>
        <begin position="97"/>
        <end position="155"/>
    </location>
</feature>
<feature type="domain" description="Collagen-like 2">
    <location>
        <begin position="175"/>
        <end position="233"/>
    </location>
</feature>
<feature type="domain" description="Collagen-like 3">
    <location>
        <begin position="236"/>
        <end position="295"/>
    </location>
</feature>
<feature type="domain" description="Collagen-like 4">
    <location>
        <begin position="299"/>
        <end position="358"/>
    </location>
</feature>
<feature type="domain" description="Collagen-like 5">
    <location>
        <begin position="380"/>
        <end position="559"/>
    </location>
</feature>
<feature type="domain" description="Collagen-like 6">
    <location>
        <begin position="608"/>
        <end position="907"/>
    </location>
</feature>
<feature type="domain" description="Collagen-like 7">
    <location>
        <begin position="920"/>
        <end position="1039"/>
    </location>
</feature>
<feature type="domain" description="Collagen-like 8">
    <location>
        <begin position="1043"/>
        <end position="1102"/>
    </location>
</feature>
<feature type="domain" description="Collagen-like 9">
    <location>
        <begin position="1128"/>
        <end position="1307"/>
    </location>
</feature>
<feature type="region of interest" description="Disordered" evidence="2">
    <location>
        <begin position="181"/>
        <end position="577"/>
    </location>
</feature>
<feature type="region of interest" description="Disordered" evidence="2">
    <location>
        <begin position="604"/>
        <end position="1326"/>
    </location>
</feature>
<feature type="region of interest" description="Disordered" evidence="2">
    <location>
        <begin position="1538"/>
        <end position="1585"/>
    </location>
</feature>
<feature type="compositionally biased region" description="Low complexity" evidence="2">
    <location>
        <begin position="181"/>
        <end position="190"/>
    </location>
</feature>
<feature type="compositionally biased region" description="Basic and acidic residues" evidence="2">
    <location>
        <begin position="191"/>
        <end position="200"/>
    </location>
</feature>
<feature type="compositionally biased region" description="Basic and acidic residues" evidence="2">
    <location>
        <begin position="209"/>
        <end position="448"/>
    </location>
</feature>
<feature type="compositionally biased region" description="Basic and acidic residues" evidence="2">
    <location>
        <begin position="456"/>
        <end position="466"/>
    </location>
</feature>
<feature type="compositionally biased region" description="Basic and acidic residues" evidence="2">
    <location>
        <begin position="474"/>
        <end position="501"/>
    </location>
</feature>
<feature type="compositionally biased region" description="Basic and acidic residues" evidence="2">
    <location>
        <begin position="510"/>
        <end position="561"/>
    </location>
</feature>
<feature type="compositionally biased region" description="Basic and acidic residues" evidence="2">
    <location>
        <begin position="606"/>
        <end position="615"/>
    </location>
</feature>
<feature type="compositionally biased region" description="Basic and acidic residues" evidence="2">
    <location>
        <begin position="622"/>
        <end position="702"/>
    </location>
</feature>
<feature type="compositionally biased region" description="Basic and acidic residues" evidence="2">
    <location>
        <begin position="718"/>
        <end position="825"/>
    </location>
</feature>
<feature type="compositionally biased region" description="Basic and acidic residues" evidence="2">
    <location>
        <begin position="832"/>
        <end position="883"/>
    </location>
</feature>
<feature type="compositionally biased region" description="Basic and acidic residues" evidence="2">
    <location>
        <begin position="895"/>
        <end position="1041"/>
    </location>
</feature>
<feature type="compositionally biased region" description="Basic and acidic residues" evidence="2">
    <location>
        <begin position="1048"/>
        <end position="1098"/>
    </location>
</feature>
<feature type="compositionally biased region" description="Basic and acidic residues" evidence="2">
    <location>
        <begin position="1107"/>
        <end position="1151"/>
    </location>
</feature>
<feature type="compositionally biased region" description="Basic and acidic residues" evidence="2">
    <location>
        <begin position="1159"/>
        <end position="1250"/>
    </location>
</feature>
<feature type="compositionally biased region" description="Basic and acidic residues" evidence="2">
    <location>
        <begin position="1265"/>
        <end position="1300"/>
    </location>
</feature>
<feature type="compositionally biased region" description="Gly residues" evidence="2">
    <location>
        <begin position="1558"/>
        <end position="1585"/>
    </location>
</feature>
<feature type="glycosylation site" description="N-linked (GlcNAc...) asparagine; by host" evidence="1">
    <location>
        <position position="87"/>
    </location>
</feature>
<feature type="glycosylation site" description="N-linked (GlcNAc...) asparagine; by host" evidence="1">
    <location>
        <position position="134"/>
    </location>
</feature>
<feature type="glycosylation site" description="N-linked (GlcNAc...) asparagine; by host" evidence="1">
    <location>
        <position position="274"/>
    </location>
</feature>
<feature type="glycosylation site" description="N-linked (GlcNAc...) asparagine; by host" evidence="1">
    <location>
        <position position="280"/>
    </location>
</feature>
<feature type="glycosylation site" description="N-linked (GlcNAc...) asparagine; by host" evidence="1">
    <location>
        <position position="286"/>
    </location>
</feature>
<feature type="glycosylation site" description="N-linked (GlcNAc...) asparagine; by host" evidence="1">
    <location>
        <position position="373"/>
    </location>
</feature>
<feature type="glycosylation site" description="N-linked (GlcNAc...) asparagine; by host" evidence="1">
    <location>
        <position position="382"/>
    </location>
</feature>
<feature type="glycosylation site" description="N-linked (GlcNAc...) asparagine; by host" evidence="1">
    <location>
        <position position="400"/>
    </location>
</feature>
<feature type="glycosylation site" description="N-linked (GlcNAc...) asparagine; by host" evidence="1">
    <location>
        <position position="409"/>
    </location>
</feature>
<feature type="glycosylation site" description="N-linked (GlcNAc...) asparagine; by host" evidence="1">
    <location>
        <position position="1345"/>
    </location>
</feature>
<feature type="glycosylation site" description="N-linked (GlcNAc...) asparagine; by host" evidence="1">
    <location>
        <position position="1420"/>
    </location>
</feature>
<feature type="glycosylation site" description="N-linked (GlcNAc...) asparagine; by host" evidence="1">
    <location>
        <position position="1545"/>
    </location>
</feature>
<accession>Q5UQ13</accession>
<organism>
    <name type="scientific">Acanthamoeba polyphaga mimivirus</name>
    <name type="common">APMV</name>
    <dbReference type="NCBI Taxonomy" id="212035"/>
    <lineage>
        <taxon>Viruses</taxon>
        <taxon>Varidnaviria</taxon>
        <taxon>Bamfordvirae</taxon>
        <taxon>Nucleocytoviricota</taxon>
        <taxon>Megaviricetes</taxon>
        <taxon>Imitervirales</taxon>
        <taxon>Mimiviridae</taxon>
        <taxon>Megamimivirinae</taxon>
        <taxon>Mimivirus</taxon>
        <taxon>Mimivirus bradfordmassiliense</taxon>
    </lineage>
</organism>
<name>COLL2_MIMIV</name>